<gene>
    <name type="primary">SYP22</name>
    <name type="synonym">SGR3</name>
    <name type="synonym">VAM3</name>
    <name type="ordered locus">At5g46860</name>
    <name type="ORF">MSD23.9</name>
</gene>
<feature type="initiator methionine" description="Removed" evidence="9">
    <location>
        <position position="1"/>
    </location>
</feature>
<feature type="chain" id="PRO_0000210254" description="Syntaxin-22">
    <location>
        <begin position="2"/>
        <end position="268"/>
    </location>
</feature>
<feature type="topological domain" description="Cytoplasmic" evidence="1">
    <location>
        <begin position="2"/>
        <end position="246"/>
    </location>
</feature>
<feature type="transmembrane region" description="Helical; Anchor for type IV membrane protein" evidence="1">
    <location>
        <begin position="247"/>
        <end position="267"/>
    </location>
</feature>
<feature type="topological domain" description="Vesicular" evidence="1">
    <location>
        <position position="268"/>
    </location>
</feature>
<feature type="domain" description="t-SNARE coiled-coil homology" evidence="2">
    <location>
        <begin position="175"/>
        <end position="237"/>
    </location>
</feature>
<feature type="region of interest" description="Disordered" evidence="3">
    <location>
        <begin position="1"/>
        <end position="23"/>
    </location>
</feature>
<feature type="modified residue" description="N-acetylserine" evidence="9">
    <location>
        <position position="2"/>
    </location>
</feature>
<accession>P93654</accession>
<organism>
    <name type="scientific">Arabidopsis thaliana</name>
    <name type="common">Mouse-ear cress</name>
    <dbReference type="NCBI Taxonomy" id="3702"/>
    <lineage>
        <taxon>Eukaryota</taxon>
        <taxon>Viridiplantae</taxon>
        <taxon>Streptophyta</taxon>
        <taxon>Embryophyta</taxon>
        <taxon>Tracheophyta</taxon>
        <taxon>Spermatophyta</taxon>
        <taxon>Magnoliopsida</taxon>
        <taxon>eudicotyledons</taxon>
        <taxon>Gunneridae</taxon>
        <taxon>Pentapetalae</taxon>
        <taxon>rosids</taxon>
        <taxon>malvids</taxon>
        <taxon>Brassicales</taxon>
        <taxon>Brassicaceae</taxon>
        <taxon>Camelineae</taxon>
        <taxon>Arabidopsis</taxon>
    </lineage>
</organism>
<dbReference type="EMBL" id="U88045">
    <property type="protein sequence ID" value="AAC49823.1"/>
    <property type="molecule type" value="mRNA"/>
</dbReference>
<dbReference type="EMBL" id="AB022221">
    <property type="protein sequence ID" value="BAA97220.1"/>
    <property type="molecule type" value="Genomic_DNA"/>
</dbReference>
<dbReference type="EMBL" id="CP002688">
    <property type="protein sequence ID" value="AED95437.1"/>
    <property type="molecule type" value="Genomic_DNA"/>
</dbReference>
<dbReference type="EMBL" id="AF385695">
    <property type="protein sequence ID" value="AAK60288.1"/>
    <property type="molecule type" value="mRNA"/>
</dbReference>
<dbReference type="EMBL" id="AY072015">
    <property type="protein sequence ID" value="AAL57708.1"/>
    <property type="molecule type" value="mRNA"/>
</dbReference>
<dbReference type="EMBL" id="AY133666">
    <property type="protein sequence ID" value="AAM91496.1"/>
    <property type="molecule type" value="mRNA"/>
</dbReference>
<dbReference type="EMBL" id="AY085121">
    <property type="protein sequence ID" value="AAM61675.1"/>
    <property type="molecule type" value="mRNA"/>
</dbReference>
<dbReference type="RefSeq" id="NP_568671.1">
    <property type="nucleotide sequence ID" value="NM_124057.4"/>
</dbReference>
<dbReference type="SMR" id="P93654"/>
<dbReference type="BioGRID" id="19978">
    <property type="interactions" value="58"/>
</dbReference>
<dbReference type="FunCoup" id="P93654">
    <property type="interactions" value="3547"/>
</dbReference>
<dbReference type="IntAct" id="P93654">
    <property type="interactions" value="55"/>
</dbReference>
<dbReference type="STRING" id="3702.P93654"/>
<dbReference type="TCDB" id="8.A.91.1.14">
    <property type="family name" value="the syntaxin (syntaxin) family"/>
</dbReference>
<dbReference type="iPTMnet" id="P93654"/>
<dbReference type="PaxDb" id="3702-AT5G46860.1"/>
<dbReference type="ProteomicsDB" id="228487"/>
<dbReference type="EnsemblPlants" id="AT5G46860.1">
    <property type="protein sequence ID" value="AT5G46860.1"/>
    <property type="gene ID" value="AT5G46860"/>
</dbReference>
<dbReference type="GeneID" id="834730"/>
<dbReference type="Gramene" id="AT5G46860.1">
    <property type="protein sequence ID" value="AT5G46860.1"/>
    <property type="gene ID" value="AT5G46860"/>
</dbReference>
<dbReference type="KEGG" id="ath:AT5G46860"/>
<dbReference type="Araport" id="AT5G46860"/>
<dbReference type="TAIR" id="AT5G46860">
    <property type="gene designation" value="VAM3"/>
</dbReference>
<dbReference type="eggNOG" id="KOG0811">
    <property type="taxonomic scope" value="Eukaryota"/>
</dbReference>
<dbReference type="HOGENOM" id="CLU_059257_3_0_1"/>
<dbReference type="InParanoid" id="P93654"/>
<dbReference type="OMA" id="LMTYTKQ"/>
<dbReference type="OrthoDB" id="364348at2759"/>
<dbReference type="PhylomeDB" id="P93654"/>
<dbReference type="PRO" id="PR:P93654"/>
<dbReference type="Proteomes" id="UP000006548">
    <property type="component" value="Chromosome 5"/>
</dbReference>
<dbReference type="ExpressionAtlas" id="P93654">
    <property type="expression patterns" value="baseline and differential"/>
</dbReference>
<dbReference type="GO" id="GO:0000325">
    <property type="term" value="C:plant-type vacuole"/>
    <property type="evidence" value="ECO:0000314"/>
    <property type="project" value="TAIR"/>
</dbReference>
<dbReference type="GO" id="GO:0009705">
    <property type="term" value="C:plant-type vacuole membrane"/>
    <property type="evidence" value="ECO:0000314"/>
    <property type="project" value="TAIR"/>
</dbReference>
<dbReference type="GO" id="GO:0005773">
    <property type="term" value="C:vacuole"/>
    <property type="evidence" value="ECO:0007005"/>
    <property type="project" value="TAIR"/>
</dbReference>
<dbReference type="GO" id="GO:0005484">
    <property type="term" value="F:SNAP receptor activity"/>
    <property type="evidence" value="ECO:0007669"/>
    <property type="project" value="InterPro"/>
</dbReference>
<dbReference type="GO" id="GO:0009660">
    <property type="term" value="P:amyloplast organization"/>
    <property type="evidence" value="ECO:0000315"/>
    <property type="project" value="TAIR"/>
</dbReference>
<dbReference type="GO" id="GO:0006886">
    <property type="term" value="P:intracellular protein transport"/>
    <property type="evidence" value="ECO:0007669"/>
    <property type="project" value="InterPro"/>
</dbReference>
<dbReference type="GO" id="GO:0045324">
    <property type="term" value="P:late endosome to vacuole transport"/>
    <property type="evidence" value="ECO:0000316"/>
    <property type="project" value="TAIR"/>
</dbReference>
<dbReference type="GO" id="GO:0009959">
    <property type="term" value="P:negative gravitropism"/>
    <property type="evidence" value="ECO:0000315"/>
    <property type="project" value="TAIR"/>
</dbReference>
<dbReference type="GO" id="GO:0010118">
    <property type="term" value="P:stomatal movement"/>
    <property type="evidence" value="ECO:0000315"/>
    <property type="project" value="TAIR"/>
</dbReference>
<dbReference type="CDD" id="cd15840">
    <property type="entry name" value="SNARE_Qa"/>
    <property type="match status" value="1"/>
</dbReference>
<dbReference type="CDD" id="cd00179">
    <property type="entry name" value="SynN"/>
    <property type="match status" value="1"/>
</dbReference>
<dbReference type="FunFam" id="1.20.5.110:FF:000035">
    <property type="entry name" value="Syntaxin-22 like"/>
    <property type="match status" value="1"/>
</dbReference>
<dbReference type="FunFam" id="1.20.58.70:FF:000004">
    <property type="entry name" value="Syntaxin-22 like"/>
    <property type="match status" value="1"/>
</dbReference>
<dbReference type="Gene3D" id="1.20.5.110">
    <property type="match status" value="1"/>
</dbReference>
<dbReference type="Gene3D" id="1.20.58.70">
    <property type="match status" value="1"/>
</dbReference>
<dbReference type="InterPro" id="IPR010989">
    <property type="entry name" value="SNARE"/>
</dbReference>
<dbReference type="InterPro" id="IPR045242">
    <property type="entry name" value="Syntaxin"/>
</dbReference>
<dbReference type="InterPro" id="IPR006012">
    <property type="entry name" value="Syntaxin/epimorphin_CS"/>
</dbReference>
<dbReference type="InterPro" id="IPR006011">
    <property type="entry name" value="Syntaxin_N"/>
</dbReference>
<dbReference type="InterPro" id="IPR000727">
    <property type="entry name" value="T_SNARE_dom"/>
</dbReference>
<dbReference type="PANTHER" id="PTHR19957">
    <property type="entry name" value="SYNTAXIN"/>
    <property type="match status" value="1"/>
</dbReference>
<dbReference type="PANTHER" id="PTHR19957:SF339">
    <property type="entry name" value="SYNTAXIN-22"/>
    <property type="match status" value="1"/>
</dbReference>
<dbReference type="Pfam" id="PF05739">
    <property type="entry name" value="SNARE"/>
    <property type="match status" value="1"/>
</dbReference>
<dbReference type="Pfam" id="PF14523">
    <property type="entry name" value="Syntaxin_2"/>
    <property type="match status" value="1"/>
</dbReference>
<dbReference type="SMART" id="SM00503">
    <property type="entry name" value="SynN"/>
    <property type="match status" value="1"/>
</dbReference>
<dbReference type="SMART" id="SM00397">
    <property type="entry name" value="t_SNARE"/>
    <property type="match status" value="1"/>
</dbReference>
<dbReference type="SUPFAM" id="SSF47661">
    <property type="entry name" value="t-snare proteins"/>
    <property type="match status" value="1"/>
</dbReference>
<dbReference type="PROSITE" id="PS00914">
    <property type="entry name" value="SYNTAXIN"/>
    <property type="match status" value="1"/>
</dbReference>
<dbReference type="PROSITE" id="PS50192">
    <property type="entry name" value="T_SNARE"/>
    <property type="match status" value="1"/>
</dbReference>
<keyword id="KW-0007">Acetylation</keyword>
<keyword id="KW-0175">Coiled coil</keyword>
<keyword id="KW-0472">Membrane</keyword>
<keyword id="KW-0653">Protein transport</keyword>
<keyword id="KW-1185">Reference proteome</keyword>
<keyword id="KW-0812">Transmembrane</keyword>
<keyword id="KW-1133">Transmembrane helix</keyword>
<keyword id="KW-0813">Transport</keyword>
<keyword id="KW-0926">Vacuole</keyword>
<reference key="1">
    <citation type="journal article" date="1997" name="J. Biol. Chem.">
        <title>The AtVAM3 encodes a syntaxin-related molecule implicated in the vacuolar assembly in Arabidopsis thaliana.</title>
        <authorList>
            <person name="Sato M.H."/>
            <person name="Nakamura N."/>
            <person name="Ohsumi Y."/>
            <person name="Kouchi H."/>
            <person name="Kondo M."/>
            <person name="Hara-Nishimura I."/>
            <person name="Nishimura M."/>
            <person name="Wada Y."/>
        </authorList>
    </citation>
    <scope>NUCLEOTIDE SEQUENCE [MRNA]</scope>
    <source>
        <strain>cv. Columbia</strain>
    </source>
</reference>
<reference key="2">
    <citation type="journal article" date="2000" name="DNA Res.">
        <title>Structural analysis of Arabidopsis thaliana chromosome 5. X. Sequence features of the regions of 3,076,755 bp covered by sixty P1 and TAC clones.</title>
        <authorList>
            <person name="Sato S."/>
            <person name="Nakamura Y."/>
            <person name="Kaneko T."/>
            <person name="Katoh T."/>
            <person name="Asamizu E."/>
            <person name="Kotani H."/>
            <person name="Tabata S."/>
        </authorList>
    </citation>
    <scope>NUCLEOTIDE SEQUENCE [LARGE SCALE GENOMIC DNA]</scope>
    <source>
        <strain>cv. Columbia</strain>
    </source>
</reference>
<reference key="3">
    <citation type="journal article" date="2017" name="Plant J.">
        <title>Araport11: a complete reannotation of the Arabidopsis thaliana reference genome.</title>
        <authorList>
            <person name="Cheng C.Y."/>
            <person name="Krishnakumar V."/>
            <person name="Chan A.P."/>
            <person name="Thibaud-Nissen F."/>
            <person name="Schobel S."/>
            <person name="Town C.D."/>
        </authorList>
    </citation>
    <scope>GENOME REANNOTATION</scope>
    <source>
        <strain>cv. Columbia</strain>
    </source>
</reference>
<reference key="4">
    <citation type="journal article" date="2003" name="Science">
        <title>Empirical analysis of transcriptional activity in the Arabidopsis genome.</title>
        <authorList>
            <person name="Yamada K."/>
            <person name="Lim J."/>
            <person name="Dale J.M."/>
            <person name="Chen H."/>
            <person name="Shinn P."/>
            <person name="Palm C.J."/>
            <person name="Southwick A.M."/>
            <person name="Wu H.C."/>
            <person name="Kim C.J."/>
            <person name="Nguyen M."/>
            <person name="Pham P.K."/>
            <person name="Cheuk R.F."/>
            <person name="Karlin-Newmann G."/>
            <person name="Liu S.X."/>
            <person name="Lam B."/>
            <person name="Sakano H."/>
            <person name="Wu T."/>
            <person name="Yu G."/>
            <person name="Miranda M."/>
            <person name="Quach H.L."/>
            <person name="Tripp M."/>
            <person name="Chang C.H."/>
            <person name="Lee J.M."/>
            <person name="Toriumi M.J."/>
            <person name="Chan M.M."/>
            <person name="Tang C.C."/>
            <person name="Onodera C.S."/>
            <person name="Deng J.M."/>
            <person name="Akiyama K."/>
            <person name="Ansari Y."/>
            <person name="Arakawa T."/>
            <person name="Banh J."/>
            <person name="Banno F."/>
            <person name="Bowser L."/>
            <person name="Brooks S.Y."/>
            <person name="Carninci P."/>
            <person name="Chao Q."/>
            <person name="Choy N."/>
            <person name="Enju A."/>
            <person name="Goldsmith A.D."/>
            <person name="Gurjal M."/>
            <person name="Hansen N.F."/>
            <person name="Hayashizaki Y."/>
            <person name="Johnson-Hopson C."/>
            <person name="Hsuan V.W."/>
            <person name="Iida K."/>
            <person name="Karnes M."/>
            <person name="Khan S."/>
            <person name="Koesema E."/>
            <person name="Ishida J."/>
            <person name="Jiang P.X."/>
            <person name="Jones T."/>
            <person name="Kawai J."/>
            <person name="Kamiya A."/>
            <person name="Meyers C."/>
            <person name="Nakajima M."/>
            <person name="Narusaka M."/>
            <person name="Seki M."/>
            <person name="Sakurai T."/>
            <person name="Satou M."/>
            <person name="Tamse R."/>
            <person name="Vaysberg M."/>
            <person name="Wallender E.K."/>
            <person name="Wong C."/>
            <person name="Yamamura Y."/>
            <person name="Yuan S."/>
            <person name="Shinozaki K."/>
            <person name="Davis R.W."/>
            <person name="Theologis A."/>
            <person name="Ecker J.R."/>
        </authorList>
    </citation>
    <scope>NUCLEOTIDE SEQUENCE [LARGE SCALE MRNA]</scope>
    <source>
        <strain>cv. Columbia</strain>
    </source>
</reference>
<reference key="5">
    <citation type="submission" date="2002-03" db="EMBL/GenBank/DDBJ databases">
        <title>Full-length cDNA from Arabidopsis thaliana.</title>
        <authorList>
            <person name="Brover V.V."/>
            <person name="Troukhan M.E."/>
            <person name="Alexandrov N.A."/>
            <person name="Lu Y.-P."/>
            <person name="Flavell R.B."/>
            <person name="Feldmann K.A."/>
        </authorList>
    </citation>
    <scope>NUCLEOTIDE SEQUENCE [LARGE SCALE MRNA]</scope>
</reference>
<reference key="6">
    <citation type="journal article" date="1996" name="Plant Physiol.">
        <title>SGR1, SGR2, SGR3: novel genetic loci involved in shoot gravitropism in Arabidopsis thaliana.</title>
        <authorList>
            <person name="Fukaki H."/>
            <person name="Fujisawa H."/>
            <person name="Tasaka M."/>
        </authorList>
    </citation>
    <scope>FUNCTION</scope>
    <scope>DISRUPTION PHENOTYPE</scope>
    <source>
        <strain>cv. Columbia</strain>
    </source>
</reference>
<reference key="7">
    <citation type="journal article" date="1999" name="Plant Physiol.">
        <title>The t-SNARE AtVAM3p resides on the prevacuolar compartment in Arabidopsis root cells.</title>
        <authorList>
            <person name="Sanderfoot A.A."/>
            <person name="Kovaleva V."/>
            <person name="Zheng H."/>
            <person name="Raikhel N.V."/>
        </authorList>
    </citation>
    <scope>SUBCELLULAR LOCATION</scope>
</reference>
<reference key="8">
    <citation type="journal article" date="2000" name="Mol. Biol. Cell">
        <title>AtVPS45 complex formation at the trans-Golgi network.</title>
        <authorList>
            <person name="Bassham D.C."/>
            <person name="Sanderfoot A.A."/>
            <person name="Kovaleva V."/>
            <person name="Zheng H."/>
            <person name="Raikhel N.V."/>
        </authorList>
    </citation>
    <scope>LACK OF INTERACTION WITH VPS45</scope>
</reference>
<reference key="9">
    <citation type="journal article" date="2001" name="Mol. Biol. Cell">
        <title>Interactions between syntaxins identify at least five SNARE complexes within the Golgi/prevacuolar system of the Arabidopsis cell.</title>
        <authorList>
            <person name="Sanderfoot A.A."/>
            <person name="Kovaleva V."/>
            <person name="Bassham D.C."/>
            <person name="Raikhel N.V."/>
        </authorList>
    </citation>
    <scope>INTERACTION WITH VTI11 AND SYP51</scope>
</reference>
<reference key="10">
    <citation type="journal article" date="2011" name="Plant J.">
        <title>The occurrence of 'bulbs', a complex configuration of the vacuolar membrane, is affected by mutations of vacuolar SNARE and phospholipase in Arabidopsis.</title>
        <authorList>
            <person name="Saito C."/>
            <person name="Uemura T."/>
            <person name="Awai C."/>
            <person name="Tominaga M."/>
            <person name="Ebine K."/>
            <person name="Ito J."/>
            <person name="Ueda T."/>
            <person name="Abe H."/>
            <person name="Morita M.T."/>
            <person name="Tasaka M."/>
            <person name="Nakano A."/>
        </authorList>
    </citation>
    <scope>FUNCTION</scope>
    <scope>DISRUPTION PHENOTYPE</scope>
    <source>
        <strain>cv. Columbia</strain>
    </source>
</reference>
<reference key="11">
    <citation type="journal article" date="2012" name="Mol. Cell. Proteomics">
        <title>Comparative large-scale characterisation of plant vs. mammal proteins reveals similar and idiosyncratic N-alpha acetylation features.</title>
        <authorList>
            <person name="Bienvenut W.V."/>
            <person name="Sumpton D."/>
            <person name="Martinez A."/>
            <person name="Lilla S."/>
            <person name="Espagne C."/>
            <person name="Meinnel T."/>
            <person name="Giglione C."/>
        </authorList>
    </citation>
    <scope>ACETYLATION [LARGE SCALE ANALYSIS] AT SER-2</scope>
    <scope>CLEAVAGE OF INITIATOR METHIONINE [LARGE SCALE ANALYSIS]</scope>
    <scope>IDENTIFICATION BY MASS SPECTROMETRY [LARGE SCALE ANALYSIS]</scope>
</reference>
<name>SYP22_ARATH</name>
<sequence length="268" mass="29481">MSFQDLESGRGRSTRKFNGGRQDSTQAVASGIFQINTGVSTFQRLVNTLGTPKDTPELREKLHKTRLHIGQLVKDTSAKLKEASETDHQSGVNPSKKIADAKLARDFQAVLKEFQKAQQTAAERETTYTPFVPQSALPSSYTAGEVDKVPEQRAQLQESKRQELVLLDNEIAFNEAVIEEREQGIQEIHQQIGEVNEIFKDLAVLVNDQGVMIDDIGTHIDNSRAATSQGKSQLVQAAKTQKSNSSLTCLLLVIFGIVLLIVIIVLAA</sequence>
<comment type="function">
    <text evidence="6 7">May provide the t-SNARE function in the vacuolar assembly. Promotes the formation of vacuolar membrane 'bulbs'. Required for inflorescence stem gravitropism.</text>
</comment>
<comment type="subunit">
    <text evidence="5">Interacts with VTI11 and SYP51 to form a t-SNARE complex, but not with VPS45.</text>
</comment>
<comment type="interaction">
    <interactant intactId="EBI-2352632">
        <id>P93654</id>
    </interactant>
    <interactant intactId="EBI-1162795">
        <id>Q9SEL6</id>
        <label>VTI11</label>
    </interactant>
    <organismsDiffer>false</organismsDiffer>
    <experiments>3</experiments>
</comment>
<comment type="subcellular location">
    <subcellularLocation>
        <location evidence="4">Prevacuolar compartment membrane</location>
        <topology evidence="4">Single-pass type IV membrane protein</topology>
    </subcellularLocation>
    <subcellularLocation>
        <location evidence="4">Vacuole membrane</location>
        <topology evidence="4">Single-pass type IV membrane protein</topology>
    </subcellularLocation>
    <text>Prevacuolar compartment (PVC) in roots, and junction of two vacuolar membranes in shoot apical meristem.</text>
</comment>
<comment type="tissue specificity">
    <text>Expressed in roots, leaves, stems, flower and green siliques.</text>
</comment>
<comment type="disruption phenotype">
    <text evidence="6 7">The sgr3-1 mutant has a reduced gravitropic response in inflorescence stem but a normal gravitropic response in hypocotyls. Reduced formation of vacuolar membrane 'bulbs'.</text>
</comment>
<comment type="similarity">
    <text evidence="8">Belongs to the syntaxin family.</text>
</comment>
<proteinExistence type="evidence at protein level"/>
<protein>
    <recommendedName>
        <fullName>Syntaxin-22</fullName>
        <shortName>AtSYP22</shortName>
        <shortName>AtVAM3</shortName>
    </recommendedName>
    <alternativeName>
        <fullName>Protein SHOOT GRAVITROPISM 3</fullName>
    </alternativeName>
</protein>
<evidence type="ECO:0000255" key="1"/>
<evidence type="ECO:0000255" key="2">
    <source>
        <dbReference type="PROSITE-ProRule" id="PRU00202"/>
    </source>
</evidence>
<evidence type="ECO:0000256" key="3">
    <source>
        <dbReference type="SAM" id="MobiDB-lite"/>
    </source>
</evidence>
<evidence type="ECO:0000269" key="4">
    <source>
    </source>
</evidence>
<evidence type="ECO:0000269" key="5">
    <source>
    </source>
</evidence>
<evidence type="ECO:0000269" key="6">
    <source>
    </source>
</evidence>
<evidence type="ECO:0000269" key="7">
    <source>
    </source>
</evidence>
<evidence type="ECO:0000305" key="8"/>
<evidence type="ECO:0007744" key="9">
    <source>
    </source>
</evidence>